<reference evidence="7 8" key="1">
    <citation type="journal article" date="2007" name="Peptides">
        <title>A combined mass spectrometric and cDNA sequencing approach to the isolation and characterization of novel antimicrobial peptides from the skin secretions of Phyllomedusa hypochondrialis azurea.</title>
        <authorList>
            <person name="Thompson A.H."/>
            <person name="Bjourson A.J."/>
            <person name="Orr D.F."/>
            <person name="Shaw C."/>
            <person name="McClean S."/>
        </authorList>
    </citation>
    <scope>NUCLEOTIDE SEQUENCE [MRNA]</scope>
    <scope>SUBCELLULAR LOCATION</scope>
    <scope>TISSUE SPECIFICITY</scope>
    <source>
        <tissue evidence="5">Skin secretion</tissue>
    </source>
</reference>
<comment type="function">
    <text evidence="1">Possesses a potent antimicrobial activity against Gram-positive and Gram-negative bacteria. Probably acts by disturbing membrane functions with its amphipathic structure (By similarity).</text>
</comment>
<comment type="subcellular location">
    <subcellularLocation>
        <location evidence="5">Secreted</location>
    </subcellularLocation>
</comment>
<comment type="tissue specificity">
    <text evidence="5">Expressed by the skin glands.</text>
</comment>
<comment type="similarity">
    <text evidence="3">Belongs to the frog skin active peptide (FSAP) family. Dermaseptin subfamily.</text>
</comment>
<feature type="signal peptide" evidence="3">
    <location>
        <begin position="1"/>
        <end position="22"/>
    </location>
</feature>
<feature type="propeptide" id="PRO_0000248609" evidence="2">
    <location>
        <begin position="23"/>
        <end position="43"/>
    </location>
</feature>
<feature type="peptide" id="PRO_0000248610" description="Dermaseptin-H3">
    <location>
        <begin position="46"/>
        <end position="66"/>
    </location>
</feature>
<feature type="propeptide" id="PRO_0000248611" evidence="2">
    <location>
        <begin position="68"/>
        <end position="69"/>
    </location>
</feature>
<feature type="region of interest" description="Disordered" evidence="4">
    <location>
        <begin position="24"/>
        <end position="44"/>
    </location>
</feature>
<feature type="compositionally biased region" description="Acidic residues" evidence="4">
    <location>
        <begin position="30"/>
        <end position="40"/>
    </location>
</feature>
<feature type="modified residue" description="Leucine amide" evidence="2">
    <location>
        <position position="66"/>
    </location>
</feature>
<protein>
    <recommendedName>
        <fullName evidence="6">Dermaseptin-H3</fullName>
    </recommendedName>
    <alternativeName>
        <fullName evidence="6">Dermaseptin-like peptide 3</fullName>
        <shortName evidence="6">DMS3</shortName>
    </alternativeName>
</protein>
<organism>
    <name type="scientific">Pithecopus azureus</name>
    <name type="common">Orange-legged monkey tree frog</name>
    <name type="synonym">Phyllomedusa azurea</name>
    <dbReference type="NCBI Taxonomy" id="2034991"/>
    <lineage>
        <taxon>Eukaryota</taxon>
        <taxon>Metazoa</taxon>
        <taxon>Chordata</taxon>
        <taxon>Craniata</taxon>
        <taxon>Vertebrata</taxon>
        <taxon>Euteleostomi</taxon>
        <taxon>Amphibia</taxon>
        <taxon>Batrachia</taxon>
        <taxon>Anura</taxon>
        <taxon>Neobatrachia</taxon>
        <taxon>Hyloidea</taxon>
        <taxon>Hylidae</taxon>
        <taxon>Phyllomedusinae</taxon>
        <taxon>Pithecopus</taxon>
    </lineage>
</organism>
<proteinExistence type="evidence at transcript level"/>
<dbReference type="EMBL" id="AM269412">
    <property type="protein sequence ID" value="CAK51561.1"/>
    <property type="molecule type" value="mRNA"/>
</dbReference>
<dbReference type="GO" id="GO:0005576">
    <property type="term" value="C:extracellular region"/>
    <property type="evidence" value="ECO:0007669"/>
    <property type="project" value="UniProtKB-SubCell"/>
</dbReference>
<dbReference type="GO" id="GO:0042742">
    <property type="term" value="P:defense response to bacterium"/>
    <property type="evidence" value="ECO:0007669"/>
    <property type="project" value="UniProtKB-KW"/>
</dbReference>
<dbReference type="InterPro" id="IPR022731">
    <property type="entry name" value="Dermaseptin_dom"/>
</dbReference>
<dbReference type="InterPro" id="IPR004275">
    <property type="entry name" value="Frog_antimicrobial_propeptide"/>
</dbReference>
<dbReference type="InterPro" id="IPR016322">
    <property type="entry name" value="FSAP"/>
</dbReference>
<dbReference type="Pfam" id="PF12121">
    <property type="entry name" value="DD_K"/>
    <property type="match status" value="1"/>
</dbReference>
<dbReference type="Pfam" id="PF03032">
    <property type="entry name" value="FSAP_sig_propep"/>
    <property type="match status" value="1"/>
</dbReference>
<dbReference type="PIRSF" id="PIRSF001822">
    <property type="entry name" value="Dermaseptin_precursor"/>
    <property type="match status" value="1"/>
</dbReference>
<name>DMS3_PITAZ</name>
<sequence length="69" mass="7663">MAFLKKSLFLVLFLGMVSLSICEEEKRENEDEEKQEDDEQSEMKRGLWSTIKNVAAAAGKAALGALGEQ</sequence>
<keyword id="KW-0027">Amidation</keyword>
<keyword id="KW-0878">Amphibian defense peptide</keyword>
<keyword id="KW-0044">Antibiotic</keyword>
<keyword id="KW-0929">Antimicrobial</keyword>
<keyword id="KW-0165">Cleavage on pair of basic residues</keyword>
<keyword id="KW-0964">Secreted</keyword>
<keyword id="KW-0732">Signal</keyword>
<evidence type="ECO:0000250" key="1">
    <source>
        <dbReference type="UniProtKB" id="P81486"/>
    </source>
</evidence>
<evidence type="ECO:0000250" key="2">
    <source>
        <dbReference type="UniProtKB" id="Q1EJP5"/>
    </source>
</evidence>
<evidence type="ECO:0000255" key="3"/>
<evidence type="ECO:0000256" key="4">
    <source>
        <dbReference type="SAM" id="MobiDB-lite"/>
    </source>
</evidence>
<evidence type="ECO:0000269" key="5">
    <source>
    </source>
</evidence>
<evidence type="ECO:0000303" key="6">
    <source>
    </source>
</evidence>
<evidence type="ECO:0000305" key="7"/>
<evidence type="ECO:0000312" key="8">
    <source>
        <dbReference type="EMBL" id="CAK51561.1"/>
    </source>
</evidence>
<gene>
    <name evidence="8" type="primary">dpp-H3</name>
</gene>
<accession>Q17UY8</accession>